<protein>
    <recommendedName>
        <fullName evidence="7">Transcription factor bHLH148</fullName>
    </recommendedName>
    <alternativeName>
        <fullName evidence="6">ATBS1 interacting factor 2</fullName>
    </alternativeName>
    <alternativeName>
        <fullName evidence="7">Basic helix-loop-helix protein 148</fullName>
        <shortName evidence="7">AtbHLH148</shortName>
        <shortName evidence="7">bHLH 148</shortName>
    </alternativeName>
    <alternativeName>
        <fullName evidence="7">Protein RSA1 INTERACTING TRANSCRIPTION FACTOR 1</fullName>
        <shortName evidence="7">AtRITF1</shortName>
    </alternativeName>
    <alternativeName>
        <fullName evidence="5">Transcription factor EN 143</fullName>
    </alternativeName>
    <alternativeName>
        <fullName evidence="7">bHLH transcription factor bHLH148</fullName>
    </alternativeName>
</protein>
<feature type="chain" id="PRO_0000358825" description="Transcription factor bHLH148">
    <location>
        <begin position="1"/>
        <end position="221"/>
    </location>
</feature>
<feature type="domain" description="bHLH" evidence="1">
    <location>
        <begin position="148"/>
        <end position="197"/>
    </location>
</feature>
<feature type="region of interest" description="Disordered" evidence="2">
    <location>
        <begin position="1"/>
        <end position="45"/>
    </location>
</feature>
<feature type="region of interest" description="Disordered" evidence="2">
    <location>
        <begin position="70"/>
        <end position="89"/>
    </location>
</feature>
<feature type="compositionally biased region" description="Low complexity" evidence="2">
    <location>
        <begin position="26"/>
        <end position="41"/>
    </location>
</feature>
<feature type="compositionally biased region" description="Low complexity" evidence="2">
    <location>
        <begin position="72"/>
        <end position="82"/>
    </location>
</feature>
<feature type="sequence conflict" description="In Ref. 4; AAM67062." evidence="8" ref="4">
    <original>MAI</original>
    <variation>VAV</variation>
    <location>
        <begin position="130"/>
        <end position="132"/>
    </location>
</feature>
<gene>
    <name evidence="7" type="primary">BHLH148</name>
    <name evidence="6" type="synonym">AIF2</name>
    <name evidence="5" type="synonym">EN143</name>
    <name evidence="7" type="synonym">RITF1</name>
    <name evidence="9" type="ordered locus">At3g06590</name>
    <name evidence="10" type="ORF">F5E6.8</name>
</gene>
<keyword id="KW-0238">DNA-binding</keyword>
<keyword id="KW-0539">Nucleus</keyword>
<keyword id="KW-1185">Reference proteome</keyword>
<keyword id="KW-0346">Stress response</keyword>
<keyword id="KW-0804">Transcription</keyword>
<keyword id="KW-0805">Transcription regulation</keyword>
<sequence length="221" mass="24256">MASLISDIEPPTSTTSDLVRRKKRSSASSAASSRSSASSVSGEIHARWRSEKQQRIYSAKLFQALQQVRLNSSASTSSSPTAQKRGKAVREAADRALAVSARGRTLWSRAILANRIKLKFRKQRRPRATMAIPAMTTVVSSSSNRSRKRRVSVLRLNKKSIPDVNRKVRVLGRLVPGCGKQSVPVILEEATDYIQALEMQVRAMNSLVQLLSSYGSAPPPI</sequence>
<proteinExistence type="evidence at protein level"/>
<accession>Q9C8Z9</accession>
<accession>C0SVA2</accession>
<accession>Q8L8X9</accession>
<name>BH148_ARATH</name>
<organism>
    <name type="scientific">Arabidopsis thaliana</name>
    <name type="common">Mouse-ear cress</name>
    <dbReference type="NCBI Taxonomy" id="3702"/>
    <lineage>
        <taxon>Eukaryota</taxon>
        <taxon>Viridiplantae</taxon>
        <taxon>Streptophyta</taxon>
        <taxon>Embryophyta</taxon>
        <taxon>Tracheophyta</taxon>
        <taxon>Spermatophyta</taxon>
        <taxon>Magnoliopsida</taxon>
        <taxon>eudicotyledons</taxon>
        <taxon>Gunneridae</taxon>
        <taxon>Pentapetalae</taxon>
        <taxon>rosids</taxon>
        <taxon>malvids</taxon>
        <taxon>Brassicales</taxon>
        <taxon>Brassicaceae</taxon>
        <taxon>Camelineae</taxon>
        <taxon>Arabidopsis</taxon>
    </lineage>
</organism>
<evidence type="ECO:0000255" key="1">
    <source>
        <dbReference type="PROSITE-ProRule" id="PRU00981"/>
    </source>
</evidence>
<evidence type="ECO:0000256" key="2">
    <source>
        <dbReference type="SAM" id="MobiDB-lite"/>
    </source>
</evidence>
<evidence type="ECO:0000269" key="3">
    <source>
    </source>
</evidence>
<evidence type="ECO:0000269" key="4">
    <source>
    </source>
</evidence>
<evidence type="ECO:0000303" key="5">
    <source>
    </source>
</evidence>
<evidence type="ECO:0000303" key="6">
    <source>
    </source>
</evidence>
<evidence type="ECO:0000303" key="7">
    <source>
    </source>
</evidence>
<evidence type="ECO:0000305" key="8"/>
<evidence type="ECO:0000312" key="9">
    <source>
        <dbReference type="Araport" id="AT3G06590"/>
    </source>
</evidence>
<evidence type="ECO:0000312" key="10">
    <source>
        <dbReference type="EMBL" id="AAG51338.1"/>
    </source>
</evidence>
<reference key="1">
    <citation type="journal article" date="2000" name="Nature">
        <title>Sequence and analysis of chromosome 3 of the plant Arabidopsis thaliana.</title>
        <authorList>
            <person name="Salanoubat M."/>
            <person name="Lemcke K."/>
            <person name="Rieger M."/>
            <person name="Ansorge W."/>
            <person name="Unseld M."/>
            <person name="Fartmann B."/>
            <person name="Valle G."/>
            <person name="Bloecker H."/>
            <person name="Perez-Alonso M."/>
            <person name="Obermaier B."/>
            <person name="Delseny M."/>
            <person name="Boutry M."/>
            <person name="Grivell L.A."/>
            <person name="Mache R."/>
            <person name="Puigdomenech P."/>
            <person name="De Simone V."/>
            <person name="Choisne N."/>
            <person name="Artiguenave F."/>
            <person name="Robert C."/>
            <person name="Brottier P."/>
            <person name="Wincker P."/>
            <person name="Cattolico L."/>
            <person name="Weissenbach J."/>
            <person name="Saurin W."/>
            <person name="Quetier F."/>
            <person name="Schaefer M."/>
            <person name="Mueller-Auer S."/>
            <person name="Gabel C."/>
            <person name="Fuchs M."/>
            <person name="Benes V."/>
            <person name="Wurmbach E."/>
            <person name="Drzonek H."/>
            <person name="Erfle H."/>
            <person name="Jordan N."/>
            <person name="Bangert S."/>
            <person name="Wiedelmann R."/>
            <person name="Kranz H."/>
            <person name="Voss H."/>
            <person name="Holland R."/>
            <person name="Brandt P."/>
            <person name="Nyakatura G."/>
            <person name="Vezzi A."/>
            <person name="D'Angelo M."/>
            <person name="Pallavicini A."/>
            <person name="Toppo S."/>
            <person name="Simionati B."/>
            <person name="Conrad A."/>
            <person name="Hornischer K."/>
            <person name="Kauer G."/>
            <person name="Loehnert T.-H."/>
            <person name="Nordsiek G."/>
            <person name="Reichelt J."/>
            <person name="Scharfe M."/>
            <person name="Schoen O."/>
            <person name="Bargues M."/>
            <person name="Terol J."/>
            <person name="Climent J."/>
            <person name="Navarro P."/>
            <person name="Collado C."/>
            <person name="Perez-Perez A."/>
            <person name="Ottenwaelder B."/>
            <person name="Duchemin D."/>
            <person name="Cooke R."/>
            <person name="Laudie M."/>
            <person name="Berger-Llauro C."/>
            <person name="Purnelle B."/>
            <person name="Masuy D."/>
            <person name="de Haan M."/>
            <person name="Maarse A.C."/>
            <person name="Alcaraz J.-P."/>
            <person name="Cottet A."/>
            <person name="Casacuberta E."/>
            <person name="Monfort A."/>
            <person name="Argiriou A."/>
            <person name="Flores M."/>
            <person name="Liguori R."/>
            <person name="Vitale D."/>
            <person name="Mannhaupt G."/>
            <person name="Haase D."/>
            <person name="Schoof H."/>
            <person name="Rudd S."/>
            <person name="Zaccaria P."/>
            <person name="Mewes H.-W."/>
            <person name="Mayer K.F.X."/>
            <person name="Kaul S."/>
            <person name="Town C.D."/>
            <person name="Koo H.L."/>
            <person name="Tallon L.J."/>
            <person name="Jenkins J."/>
            <person name="Rooney T."/>
            <person name="Rizzo M."/>
            <person name="Walts A."/>
            <person name="Utterback T."/>
            <person name="Fujii C.Y."/>
            <person name="Shea T.P."/>
            <person name="Creasy T.H."/>
            <person name="Haas B."/>
            <person name="Maiti R."/>
            <person name="Wu D."/>
            <person name="Peterson J."/>
            <person name="Van Aken S."/>
            <person name="Pai G."/>
            <person name="Militscher J."/>
            <person name="Sellers P."/>
            <person name="Gill J.E."/>
            <person name="Feldblyum T.V."/>
            <person name="Preuss D."/>
            <person name="Lin X."/>
            <person name="Nierman W.C."/>
            <person name="Salzberg S.L."/>
            <person name="White O."/>
            <person name="Venter J.C."/>
            <person name="Fraser C.M."/>
            <person name="Kaneko T."/>
            <person name="Nakamura Y."/>
            <person name="Sato S."/>
            <person name="Kato T."/>
            <person name="Asamizu E."/>
            <person name="Sasamoto S."/>
            <person name="Kimura T."/>
            <person name="Idesawa K."/>
            <person name="Kawashima K."/>
            <person name="Kishida Y."/>
            <person name="Kiyokawa C."/>
            <person name="Kohara M."/>
            <person name="Matsumoto M."/>
            <person name="Matsuno A."/>
            <person name="Muraki A."/>
            <person name="Nakayama S."/>
            <person name="Nakazaki N."/>
            <person name="Shinpo S."/>
            <person name="Takeuchi C."/>
            <person name="Wada T."/>
            <person name="Watanabe A."/>
            <person name="Yamada M."/>
            <person name="Yasuda M."/>
            <person name="Tabata S."/>
        </authorList>
    </citation>
    <scope>NUCLEOTIDE SEQUENCE [LARGE SCALE GENOMIC DNA]</scope>
    <source>
        <strain>cv. Columbia</strain>
    </source>
</reference>
<reference key="2">
    <citation type="journal article" date="2017" name="Plant J.">
        <title>Araport11: a complete reannotation of the Arabidopsis thaliana reference genome.</title>
        <authorList>
            <person name="Cheng C.Y."/>
            <person name="Krishnakumar V."/>
            <person name="Chan A.P."/>
            <person name="Thibaud-Nissen F."/>
            <person name="Schobel S."/>
            <person name="Town C.D."/>
        </authorList>
    </citation>
    <scope>GENOME REANNOTATION</scope>
    <source>
        <strain>cv. Columbia</strain>
    </source>
</reference>
<reference key="3">
    <citation type="journal article" date="2003" name="Science">
        <title>Empirical analysis of transcriptional activity in the Arabidopsis genome.</title>
        <authorList>
            <person name="Yamada K."/>
            <person name="Lim J."/>
            <person name="Dale J.M."/>
            <person name="Chen H."/>
            <person name="Shinn P."/>
            <person name="Palm C.J."/>
            <person name="Southwick A.M."/>
            <person name="Wu H.C."/>
            <person name="Kim C.J."/>
            <person name="Nguyen M."/>
            <person name="Pham P.K."/>
            <person name="Cheuk R.F."/>
            <person name="Karlin-Newmann G."/>
            <person name="Liu S.X."/>
            <person name="Lam B."/>
            <person name="Sakano H."/>
            <person name="Wu T."/>
            <person name="Yu G."/>
            <person name="Miranda M."/>
            <person name="Quach H.L."/>
            <person name="Tripp M."/>
            <person name="Chang C.H."/>
            <person name="Lee J.M."/>
            <person name="Toriumi M.J."/>
            <person name="Chan M.M."/>
            <person name="Tang C.C."/>
            <person name="Onodera C.S."/>
            <person name="Deng J.M."/>
            <person name="Akiyama K."/>
            <person name="Ansari Y."/>
            <person name="Arakawa T."/>
            <person name="Banh J."/>
            <person name="Banno F."/>
            <person name="Bowser L."/>
            <person name="Brooks S.Y."/>
            <person name="Carninci P."/>
            <person name="Chao Q."/>
            <person name="Choy N."/>
            <person name="Enju A."/>
            <person name="Goldsmith A.D."/>
            <person name="Gurjal M."/>
            <person name="Hansen N.F."/>
            <person name="Hayashizaki Y."/>
            <person name="Johnson-Hopson C."/>
            <person name="Hsuan V.W."/>
            <person name="Iida K."/>
            <person name="Karnes M."/>
            <person name="Khan S."/>
            <person name="Koesema E."/>
            <person name="Ishida J."/>
            <person name="Jiang P.X."/>
            <person name="Jones T."/>
            <person name="Kawai J."/>
            <person name="Kamiya A."/>
            <person name="Meyers C."/>
            <person name="Nakajima M."/>
            <person name="Narusaka M."/>
            <person name="Seki M."/>
            <person name="Sakurai T."/>
            <person name="Satou M."/>
            <person name="Tamse R."/>
            <person name="Vaysberg M."/>
            <person name="Wallender E.K."/>
            <person name="Wong C."/>
            <person name="Yamamura Y."/>
            <person name="Yuan S."/>
            <person name="Shinozaki K."/>
            <person name="Davis R.W."/>
            <person name="Theologis A."/>
            <person name="Ecker J.R."/>
        </authorList>
    </citation>
    <scope>NUCLEOTIDE SEQUENCE [LARGE SCALE MRNA]</scope>
    <source>
        <strain>cv. Columbia</strain>
    </source>
</reference>
<reference key="4">
    <citation type="submission" date="2002-03" db="EMBL/GenBank/DDBJ databases">
        <title>Full-length cDNA from Arabidopsis thaliana.</title>
        <authorList>
            <person name="Brover V.V."/>
            <person name="Troukhan M.E."/>
            <person name="Alexandrov N.A."/>
            <person name="Lu Y.-P."/>
            <person name="Flavell R.B."/>
            <person name="Feldmann K.A."/>
        </authorList>
    </citation>
    <scope>NUCLEOTIDE SEQUENCE [LARGE SCALE MRNA]</scope>
</reference>
<reference key="5">
    <citation type="submission" date="2009-03" db="EMBL/GenBank/DDBJ databases">
        <title>ORF cloning and analysis of Arabidopsis transcription factor genes.</title>
        <authorList>
            <person name="Fujita M."/>
            <person name="Mizukado S."/>
            <person name="Seki M."/>
            <person name="Shinozaki K."/>
            <person name="Mitsuda N."/>
            <person name="Takiguchi Y."/>
            <person name="Takagi M."/>
        </authorList>
    </citation>
    <scope>NUCLEOTIDE SEQUENCE [LARGE SCALE MRNA]</scope>
</reference>
<reference key="6">
    <citation type="journal article" date="2003" name="Plant Cell">
        <title>The Arabidopsis basic/helix-loop-helix transcription factor family.</title>
        <authorList>
            <person name="Toledo-Ortiz G."/>
            <person name="Huq E."/>
            <person name="Quail P.H."/>
        </authorList>
    </citation>
    <scope>GENE FAMILY</scope>
    <scope>NOMENCLATURE</scope>
</reference>
<reference key="7">
    <citation type="journal article" date="2003" name="Plant Cell">
        <title>Update on the basic helix-loop-helix transcription factor gene family in Arabidopsis thaliana.</title>
        <authorList>
            <person name="Bailey P.C."/>
            <person name="Martin C."/>
            <person name="Toledo-Ortiz G."/>
            <person name="Quail P.H."/>
            <person name="Huq E."/>
            <person name="Heim M.A."/>
            <person name="Jakoby M."/>
            <person name="Werber M."/>
            <person name="Weisshaar B."/>
        </authorList>
    </citation>
    <scope>GENE FAMILY</scope>
    <scope>NOMENCLATURE</scope>
</reference>
<reference key="8">
    <citation type="journal article" date="2009" name="Plant Cell">
        <title>Regulation of Arabidopsis brassinosteroid signaling by atypical basic helix-loop-helix proteins.</title>
        <authorList>
            <person name="Wang H."/>
            <person name="Zhu Y."/>
            <person name="Fujioka S."/>
            <person name="Asami T."/>
            <person name="Li J."/>
            <person name="Li J."/>
        </authorList>
    </citation>
    <scope>FUNCTION</scope>
    <scope>INTERACTION WITH PRE3</scope>
    <source>
        <strain>cv. Columbia</strain>
    </source>
</reference>
<reference key="9">
    <citation type="journal article" date="2013" name="PLoS Genet.">
        <title>A nuclear calcium-sensing pathway is critical for gene regulation and salt stress tolerance in Arabidopsis.</title>
        <authorList>
            <person name="Guan Q."/>
            <person name="Wu J."/>
            <person name="Yue X."/>
            <person name="Zhang Y."/>
            <person name="Zhu J."/>
        </authorList>
    </citation>
    <scope>FUNCTION</scope>
    <scope>DISRUPTION PHENOTYPE</scope>
    <scope>INTERACTION WITH RSA1</scope>
    <scope>SUBCELLULAR LOCATION</scope>
    <scope>INDUCTION BY SALT STRESS</scope>
    <source>
        <strain>cv. Columbia</strain>
        <strain>cv. Columbia GL1</strain>
    </source>
</reference>
<comment type="function">
    <text evidence="3 4">bHLH transcription factor that binds DNA on specific sequence 5'-CANNTG-3' in target gene promoters (PubMed:24009530). Negatively regulates brassinosteroid signaling (PubMed:20023194). Together with BHLH148/RITF1, regulates the transcription of several genes involved in the detoxification of reactive oxygen species (ROS) generated by salt (NaCl) stress. Confers tolerance to salt and to the oxidative stress-inducing reagents hydrogen peroxide H(2)O(2) and methyl viologen (MV) (PubMed:24009530).</text>
</comment>
<comment type="subunit">
    <text evidence="3 4 8">Homodimer (Probable). Interacts with PRE3. Binds to RSA1 (PubMed:24009530).</text>
</comment>
<comment type="interaction">
    <interactant intactId="EBI-4434374">
        <id>Q9C8Z9</id>
    </interactant>
    <interactant intactId="EBI-4424312">
        <id>Q93VJ4</id>
        <label>BEE2</label>
    </interactant>
    <organismsDiffer>false</organismsDiffer>
    <experiments>4</experiments>
</comment>
<comment type="interaction">
    <interactant intactId="EBI-4434374">
        <id>Q9C8Z9</id>
    </interactant>
    <interactant intactId="EBI-4469930">
        <id>Q8GY61</id>
        <label>BHLH63</label>
    </interactant>
    <organismsDiffer>false</organismsDiffer>
    <experiments>3</experiments>
</comment>
<comment type="interaction">
    <interactant intactId="EBI-4434374">
        <id>Q9C8Z9</id>
    </interactant>
    <interactant intactId="EBI-15191993">
        <id>Q9LV17</id>
        <label>BHLH79</label>
    </interactant>
    <organismsDiffer>false</organismsDiffer>
    <experiments>5</experiments>
</comment>
<comment type="interaction">
    <interactant intactId="EBI-4434374">
        <id>Q9C8Z9</id>
    </interactant>
    <interactant intactId="EBI-15197377">
        <id>Q9ZPW3-2</id>
        <label>HBI1</label>
    </interactant>
    <organismsDiffer>false</organismsDiffer>
    <experiments>4</experiments>
</comment>
<comment type="interaction">
    <interactant intactId="EBI-4434374">
        <id>Q9C8Z9</id>
    </interactant>
    <interactant intactId="EBI-4424361">
        <id>Q9SZI2</id>
        <label>NAP1;1</label>
    </interactant>
    <organismsDiffer>false</organismsDiffer>
    <experiments>3</experiments>
</comment>
<comment type="interaction">
    <interactant intactId="EBI-4434374">
        <id>Q9C8Z9</id>
    </interactant>
    <interactant intactId="EBI-4459591">
        <id>Q9LXG5</id>
        <label>PRE2</label>
    </interactant>
    <organismsDiffer>false</organismsDiffer>
    <experiments>5</experiments>
</comment>
<comment type="subcellular location">
    <subcellularLocation>
        <location evidence="4">Nucleus</location>
    </subcellularLocation>
</comment>
<comment type="induction">
    <text evidence="4">Slightly induced by salt (NaCl) stress.</text>
</comment>
<comment type="disruption phenotype">
    <text evidence="4">Hypersensitivity to salt (NaCl) stress during seed germination and during seedling growth and development. Hypersensitivity to hydrogen peroxide H(2)O(2) and methyl viologen (MV).</text>
</comment>
<dbReference type="EMBL" id="AC020580">
    <property type="protein sequence ID" value="AAG51338.1"/>
    <property type="molecule type" value="Genomic_DNA"/>
</dbReference>
<dbReference type="EMBL" id="CP002686">
    <property type="protein sequence ID" value="AEE74418.1"/>
    <property type="molecule type" value="Genomic_DNA"/>
</dbReference>
<dbReference type="EMBL" id="CP002686">
    <property type="protein sequence ID" value="AEE74419.1"/>
    <property type="molecule type" value="Genomic_DNA"/>
</dbReference>
<dbReference type="EMBL" id="CP002686">
    <property type="protein sequence ID" value="ANM63825.1"/>
    <property type="molecule type" value="Genomic_DNA"/>
</dbReference>
<dbReference type="EMBL" id="CP002686">
    <property type="protein sequence ID" value="ANM63826.1"/>
    <property type="molecule type" value="Genomic_DNA"/>
</dbReference>
<dbReference type="EMBL" id="AY081288">
    <property type="protein sequence ID" value="AAL91177.1"/>
    <property type="molecule type" value="mRNA"/>
</dbReference>
<dbReference type="EMBL" id="AY093390">
    <property type="protein sequence ID" value="AAM13389.1"/>
    <property type="molecule type" value="mRNA"/>
</dbReference>
<dbReference type="EMBL" id="AY088744">
    <property type="protein sequence ID" value="AAM67062.1"/>
    <property type="molecule type" value="mRNA"/>
</dbReference>
<dbReference type="EMBL" id="AB493605">
    <property type="protein sequence ID" value="BAH30443.1"/>
    <property type="molecule type" value="mRNA"/>
</dbReference>
<dbReference type="RefSeq" id="NP_001325894.1">
    <property type="nucleotide sequence ID" value="NM_001337664.1"/>
</dbReference>
<dbReference type="RefSeq" id="NP_001325895.1">
    <property type="nucleotide sequence ID" value="NM_001337665.1"/>
</dbReference>
<dbReference type="RefSeq" id="NP_566287.1">
    <property type="nucleotide sequence ID" value="NM_111535.3"/>
</dbReference>
<dbReference type="RefSeq" id="NP_974239.1">
    <property type="nucleotide sequence ID" value="NM_202510.1"/>
</dbReference>
<dbReference type="SMR" id="Q9C8Z9"/>
<dbReference type="BioGRID" id="5173">
    <property type="interactions" value="28"/>
</dbReference>
<dbReference type="FunCoup" id="Q9C8Z9">
    <property type="interactions" value="344"/>
</dbReference>
<dbReference type="IntAct" id="Q9C8Z9">
    <property type="interactions" value="22"/>
</dbReference>
<dbReference type="STRING" id="3702.Q9C8Z9"/>
<dbReference type="PaxDb" id="3702-AT3G06590.2"/>
<dbReference type="ProteomicsDB" id="240468"/>
<dbReference type="EnsemblPlants" id="AT3G06590.1">
    <property type="protein sequence ID" value="AT3G06590.1"/>
    <property type="gene ID" value="AT3G06590"/>
</dbReference>
<dbReference type="EnsemblPlants" id="AT3G06590.2">
    <property type="protein sequence ID" value="AT3G06590.2"/>
    <property type="gene ID" value="AT3G06590"/>
</dbReference>
<dbReference type="EnsemblPlants" id="AT3G06590.3">
    <property type="protein sequence ID" value="AT3G06590.3"/>
    <property type="gene ID" value="AT3G06590"/>
</dbReference>
<dbReference type="EnsemblPlants" id="AT3G06590.4">
    <property type="protein sequence ID" value="AT3G06590.4"/>
    <property type="gene ID" value="AT3G06590"/>
</dbReference>
<dbReference type="GeneID" id="819838"/>
<dbReference type="Gramene" id="AT3G06590.1">
    <property type="protein sequence ID" value="AT3G06590.1"/>
    <property type="gene ID" value="AT3G06590"/>
</dbReference>
<dbReference type="Gramene" id="AT3G06590.2">
    <property type="protein sequence ID" value="AT3G06590.2"/>
    <property type="gene ID" value="AT3G06590"/>
</dbReference>
<dbReference type="Gramene" id="AT3G06590.3">
    <property type="protein sequence ID" value="AT3G06590.3"/>
    <property type="gene ID" value="AT3G06590"/>
</dbReference>
<dbReference type="Gramene" id="AT3G06590.4">
    <property type="protein sequence ID" value="AT3G06590.4"/>
    <property type="gene ID" value="AT3G06590"/>
</dbReference>
<dbReference type="KEGG" id="ath:AT3G06590"/>
<dbReference type="Araport" id="AT3G06590"/>
<dbReference type="TAIR" id="AT3G06590">
    <property type="gene designation" value="AIF2"/>
</dbReference>
<dbReference type="eggNOG" id="ENOG502RY2C">
    <property type="taxonomic scope" value="Eukaryota"/>
</dbReference>
<dbReference type="HOGENOM" id="CLU_090794_0_1_1"/>
<dbReference type="InParanoid" id="Q9C8Z9"/>
<dbReference type="OMA" id="NNHTRWK"/>
<dbReference type="OrthoDB" id="1647165at2759"/>
<dbReference type="PhylomeDB" id="Q9C8Z9"/>
<dbReference type="PRO" id="PR:Q9C8Z9"/>
<dbReference type="Proteomes" id="UP000006548">
    <property type="component" value="Chromosome 3"/>
</dbReference>
<dbReference type="ExpressionAtlas" id="Q9C8Z9">
    <property type="expression patterns" value="baseline and differential"/>
</dbReference>
<dbReference type="GO" id="GO:0005634">
    <property type="term" value="C:nucleus"/>
    <property type="evidence" value="ECO:0000314"/>
    <property type="project" value="UniProtKB"/>
</dbReference>
<dbReference type="GO" id="GO:0003700">
    <property type="term" value="F:DNA-binding transcription factor activity"/>
    <property type="evidence" value="ECO:0000314"/>
    <property type="project" value="TAIR"/>
</dbReference>
<dbReference type="GO" id="GO:0046983">
    <property type="term" value="F:protein dimerization activity"/>
    <property type="evidence" value="ECO:0007669"/>
    <property type="project" value="InterPro"/>
</dbReference>
<dbReference type="GO" id="GO:0043565">
    <property type="term" value="F:sequence-specific DNA binding"/>
    <property type="evidence" value="ECO:0000314"/>
    <property type="project" value="UniProtKB"/>
</dbReference>
<dbReference type="GO" id="GO:0000976">
    <property type="term" value="F:transcription cis-regulatory region binding"/>
    <property type="evidence" value="ECO:0000353"/>
    <property type="project" value="TAIR"/>
</dbReference>
<dbReference type="GO" id="GO:0006355">
    <property type="term" value="P:regulation of DNA-templated transcription"/>
    <property type="evidence" value="ECO:0000315"/>
    <property type="project" value="TAIR"/>
</dbReference>
<dbReference type="GO" id="GO:0042542">
    <property type="term" value="P:response to hydrogen peroxide"/>
    <property type="evidence" value="ECO:0000315"/>
    <property type="project" value="UniProtKB"/>
</dbReference>
<dbReference type="GO" id="GO:0006979">
    <property type="term" value="P:response to oxidative stress"/>
    <property type="evidence" value="ECO:0000315"/>
    <property type="project" value="UniProtKB"/>
</dbReference>
<dbReference type="GO" id="GO:0009651">
    <property type="term" value="P:response to salt stress"/>
    <property type="evidence" value="ECO:0000315"/>
    <property type="project" value="UniProtKB"/>
</dbReference>
<dbReference type="CDD" id="cd11444">
    <property type="entry name" value="bHLH_AtIBH1_like"/>
    <property type="match status" value="1"/>
</dbReference>
<dbReference type="Gene3D" id="4.10.280.10">
    <property type="entry name" value="Helix-loop-helix DNA-binding domain"/>
    <property type="match status" value="1"/>
</dbReference>
<dbReference type="InterPro" id="IPR044549">
    <property type="entry name" value="bHLH_AtIBH1-like"/>
</dbReference>
<dbReference type="InterPro" id="IPR011598">
    <property type="entry name" value="bHLH_dom"/>
</dbReference>
<dbReference type="InterPro" id="IPR036638">
    <property type="entry name" value="HLH_DNA-bd_sf"/>
</dbReference>
<dbReference type="InterPro" id="IPR044660">
    <property type="entry name" value="IBH1-like"/>
</dbReference>
<dbReference type="PANTHER" id="PTHR33124:SF12">
    <property type="entry name" value="TRANSCRIPTION FACTOR BHLH148"/>
    <property type="match status" value="1"/>
</dbReference>
<dbReference type="PANTHER" id="PTHR33124">
    <property type="entry name" value="TRANSCRIPTION FACTOR IBH1-LIKE 1"/>
    <property type="match status" value="1"/>
</dbReference>
<dbReference type="SUPFAM" id="SSF47459">
    <property type="entry name" value="HLH, helix-loop-helix DNA-binding domain"/>
    <property type="match status" value="1"/>
</dbReference>
<dbReference type="PROSITE" id="PS50888">
    <property type="entry name" value="BHLH"/>
    <property type="match status" value="1"/>
</dbReference>